<evidence type="ECO:0000250" key="1"/>
<evidence type="ECO:0000255" key="2"/>
<evidence type="ECO:0000305" key="3"/>
<protein>
    <recommendedName>
        <fullName>1-acyl-sn-glycerol-3-phosphate acyltransferase</fullName>
        <shortName>1-AGP acyltransferase</shortName>
        <shortName>1-AGPAT</shortName>
        <ecNumber>2.3.1.51</ecNumber>
    </recommendedName>
    <alternativeName>
        <fullName>Lysophosphatidic acid acyltransferase</fullName>
        <shortName>LPAAT</shortName>
    </alternativeName>
</protein>
<sequence>MAKTRTSSLRNRRQLKTAVAATADDDKDGIFMVLLSCFKIFVCFAIVLITAVAWGLIMVLLLPWPYMRIRLGNLYGHIIGGLVIWLYGIPIEIQGSEHTKKRAIYISNHASPIDAFFVMWLAPIGTVGVAKKEVIWYPLLGQLYTLAHHIRIDRSNPAAAIQSMKEAVRVITEKNLSLIMFPEGTRSGDGRLLPFKKGFVHLALQSHLPIVPMILTGTHLAWRKGTFRVRPVPITVKYLPPINTDDWTVDKIDDYVKMIHDIYVRNLPASQKPLGSTNRSK</sequence>
<dbReference type="EC" id="2.3.1.51"/>
<dbReference type="EMBL" id="U32988">
    <property type="protein sequence ID" value="AAC49185.1"/>
    <property type="molecule type" value="mRNA"/>
</dbReference>
<dbReference type="SMR" id="Q42868"/>
<dbReference type="BRENDA" id="2.3.1.51">
    <property type="organism ID" value="17288"/>
</dbReference>
<dbReference type="UniPathway" id="UPA00557">
    <property type="reaction ID" value="UER00613"/>
</dbReference>
<dbReference type="GO" id="GO:0005783">
    <property type="term" value="C:endoplasmic reticulum"/>
    <property type="evidence" value="ECO:0007669"/>
    <property type="project" value="TreeGrafter"/>
</dbReference>
<dbReference type="GO" id="GO:0016020">
    <property type="term" value="C:membrane"/>
    <property type="evidence" value="ECO:0007669"/>
    <property type="project" value="UniProtKB-SubCell"/>
</dbReference>
<dbReference type="GO" id="GO:0003841">
    <property type="term" value="F:1-acylglycerol-3-phosphate O-acyltransferase activity"/>
    <property type="evidence" value="ECO:0007669"/>
    <property type="project" value="UniProtKB-EC"/>
</dbReference>
<dbReference type="GO" id="GO:0016024">
    <property type="term" value="P:CDP-diacylglycerol biosynthetic process"/>
    <property type="evidence" value="ECO:0007669"/>
    <property type="project" value="UniProtKB-UniPathway"/>
</dbReference>
<dbReference type="GO" id="GO:0006654">
    <property type="term" value="P:phosphatidic acid biosynthetic process"/>
    <property type="evidence" value="ECO:0007669"/>
    <property type="project" value="TreeGrafter"/>
</dbReference>
<dbReference type="CDD" id="cd07989">
    <property type="entry name" value="LPLAT_AGPAT-like"/>
    <property type="match status" value="1"/>
</dbReference>
<dbReference type="InterPro" id="IPR004552">
    <property type="entry name" value="AGP_acyltrans"/>
</dbReference>
<dbReference type="InterPro" id="IPR002123">
    <property type="entry name" value="Plipid/glycerol_acylTrfase"/>
</dbReference>
<dbReference type="NCBIfam" id="TIGR00530">
    <property type="entry name" value="AGP_acyltrn"/>
    <property type="match status" value="1"/>
</dbReference>
<dbReference type="PANTHER" id="PTHR10434">
    <property type="entry name" value="1-ACYL-SN-GLYCEROL-3-PHOSPHATE ACYLTRANSFERASE"/>
    <property type="match status" value="1"/>
</dbReference>
<dbReference type="PANTHER" id="PTHR10434:SF11">
    <property type="entry name" value="1-ACYL-SN-GLYCEROL-3-PHOSPHATE ACYLTRANSFERASE"/>
    <property type="match status" value="1"/>
</dbReference>
<dbReference type="Pfam" id="PF01553">
    <property type="entry name" value="Acyltransferase"/>
    <property type="match status" value="1"/>
</dbReference>
<dbReference type="SMART" id="SM00563">
    <property type="entry name" value="PlsC"/>
    <property type="match status" value="1"/>
</dbReference>
<dbReference type="SUPFAM" id="SSF69593">
    <property type="entry name" value="Glycerol-3-phosphate (1)-acyltransferase"/>
    <property type="match status" value="1"/>
</dbReference>
<name>PLSC_LIMAL</name>
<keyword id="KW-0012">Acyltransferase</keyword>
<keyword id="KW-0444">Lipid biosynthesis</keyword>
<keyword id="KW-0443">Lipid metabolism</keyword>
<keyword id="KW-0472">Membrane</keyword>
<keyword id="KW-0594">Phospholipid biosynthesis</keyword>
<keyword id="KW-1208">Phospholipid metabolism</keyword>
<keyword id="KW-0808">Transferase</keyword>
<keyword id="KW-0812">Transmembrane</keyword>
<keyword id="KW-1133">Transmembrane helix</keyword>
<accession>Q42868</accession>
<comment type="function">
    <text>Converts lysophosphatidic acid (LPA) into phosphatidic acid by incorporating acyl moiety at the 2 position. This enzyme uses erucoyl-CoA as an acyl donor.</text>
</comment>
<comment type="catalytic activity">
    <reaction>
        <text>a 1-acyl-sn-glycero-3-phosphate + an acyl-CoA = a 1,2-diacyl-sn-glycero-3-phosphate + CoA</text>
        <dbReference type="Rhea" id="RHEA:19709"/>
        <dbReference type="ChEBI" id="CHEBI:57287"/>
        <dbReference type="ChEBI" id="CHEBI:57970"/>
        <dbReference type="ChEBI" id="CHEBI:58342"/>
        <dbReference type="ChEBI" id="CHEBI:58608"/>
        <dbReference type="EC" id="2.3.1.51"/>
    </reaction>
</comment>
<comment type="pathway">
    <text>Phospholipid metabolism; CDP-diacylglycerol biosynthesis; CDP-diacylglycerol from sn-glycerol 3-phosphate: step 2/3.</text>
</comment>
<comment type="subcellular location">
    <subcellularLocation>
        <location evidence="3">Membrane</location>
        <topology evidence="3">Multi-pass membrane protein</topology>
    </subcellularLocation>
</comment>
<comment type="domain">
    <text evidence="1">The HXXXXD motif is essential for acyltransferase activity and may constitute the binding site for the phosphate moiety of the glycerol-3-phosphate.</text>
</comment>
<comment type="similarity">
    <text evidence="3">Belongs to the 1-acyl-sn-glycerol-3-phosphate acyltransferase family.</text>
</comment>
<organism>
    <name type="scientific">Limnanthes alba</name>
    <name type="common">White meadowfoam</name>
    <dbReference type="NCBI Taxonomy" id="42439"/>
    <lineage>
        <taxon>Eukaryota</taxon>
        <taxon>Viridiplantae</taxon>
        <taxon>Streptophyta</taxon>
        <taxon>Embryophyta</taxon>
        <taxon>Tracheophyta</taxon>
        <taxon>Spermatophyta</taxon>
        <taxon>Magnoliopsida</taxon>
        <taxon>eudicotyledons</taxon>
        <taxon>Gunneridae</taxon>
        <taxon>Pentapetalae</taxon>
        <taxon>rosids</taxon>
        <taxon>malvids</taxon>
        <taxon>Brassicales</taxon>
        <taxon>Limnanthaceae</taxon>
        <taxon>Limnanthes</taxon>
    </lineage>
</organism>
<feature type="chain" id="PRO_0000208186" description="1-acyl-sn-glycerol-3-phosphate acyltransferase">
    <location>
        <begin position="1"/>
        <end position="281"/>
    </location>
</feature>
<feature type="transmembrane region" description="Helical" evidence="2">
    <location>
        <begin position="40"/>
        <end position="60"/>
    </location>
</feature>
<feature type="transmembrane region" description="Helical" evidence="2">
    <location>
        <begin position="71"/>
        <end position="91"/>
    </location>
</feature>
<feature type="transmembrane region" description="Helical" evidence="2">
    <location>
        <begin position="110"/>
        <end position="130"/>
    </location>
</feature>
<feature type="short sequence motif" description="HXXXXD motif">
    <location>
        <begin position="109"/>
        <end position="114"/>
    </location>
</feature>
<reference key="1">
    <citation type="journal article" date="1995" name="Plant Physiol.">
        <title>Lysophosphatidic acid acyltransferase from meadowfoam mediates insertion of erucic acid at the sn-2 position of triacylglycerol in transgenic rapeseed oil.</title>
        <authorList>
            <person name="Lassner M.W."/>
            <person name="Levering C.K."/>
            <person name="Davies H.M.D."/>
            <person name="Knutzon D.S."/>
        </authorList>
    </citation>
    <scope>NUCLEOTIDE SEQUENCE [MRNA]</scope>
    <source>
        <strain>Alba</strain>
    </source>
</reference>
<proteinExistence type="evidence at transcript level"/>